<organism>
    <name type="scientific">Bordetella avium (strain 197N)</name>
    <dbReference type="NCBI Taxonomy" id="360910"/>
    <lineage>
        <taxon>Bacteria</taxon>
        <taxon>Pseudomonadati</taxon>
        <taxon>Pseudomonadota</taxon>
        <taxon>Betaproteobacteria</taxon>
        <taxon>Burkholderiales</taxon>
        <taxon>Alcaligenaceae</taxon>
        <taxon>Bordetella</taxon>
    </lineage>
</organism>
<dbReference type="EMBL" id="AM167904">
    <property type="protein sequence ID" value="CAJ47656.1"/>
    <property type="molecule type" value="Genomic_DNA"/>
</dbReference>
<dbReference type="RefSeq" id="WP_012415774.1">
    <property type="nucleotide sequence ID" value="NC_010645.1"/>
</dbReference>
<dbReference type="SMR" id="Q2L201"/>
<dbReference type="STRING" id="360910.BAV0071"/>
<dbReference type="GeneID" id="92936683"/>
<dbReference type="KEGG" id="bav:BAV0071"/>
<dbReference type="eggNOG" id="COG1965">
    <property type="taxonomic scope" value="Bacteria"/>
</dbReference>
<dbReference type="HOGENOM" id="CLU_080880_3_0_4"/>
<dbReference type="OrthoDB" id="285675at2"/>
<dbReference type="Proteomes" id="UP000001977">
    <property type="component" value="Chromosome"/>
</dbReference>
<dbReference type="GO" id="GO:0005737">
    <property type="term" value="C:cytoplasm"/>
    <property type="evidence" value="ECO:0007669"/>
    <property type="project" value="UniProtKB-ARBA"/>
</dbReference>
<dbReference type="GO" id="GO:0008199">
    <property type="term" value="F:ferric iron binding"/>
    <property type="evidence" value="ECO:0007669"/>
    <property type="project" value="InterPro"/>
</dbReference>
<dbReference type="GO" id="GO:0016226">
    <property type="term" value="P:iron-sulfur cluster assembly"/>
    <property type="evidence" value="ECO:0007669"/>
    <property type="project" value="UniProtKB-UniRule"/>
</dbReference>
<dbReference type="Gene3D" id="3.30.920.10">
    <property type="entry name" value="Frataxin/CyaY"/>
    <property type="match status" value="1"/>
</dbReference>
<dbReference type="HAMAP" id="MF_00142">
    <property type="entry name" value="CyaY"/>
    <property type="match status" value="1"/>
</dbReference>
<dbReference type="InterPro" id="IPR047584">
    <property type="entry name" value="CyaY"/>
</dbReference>
<dbReference type="InterPro" id="IPR002908">
    <property type="entry name" value="Frataxin/CyaY"/>
</dbReference>
<dbReference type="InterPro" id="IPR036524">
    <property type="entry name" value="Frataxin/CyaY_sf"/>
</dbReference>
<dbReference type="InterPro" id="IPR020895">
    <property type="entry name" value="Frataxin_CS"/>
</dbReference>
<dbReference type="NCBIfam" id="TIGR03421">
    <property type="entry name" value="FeS_CyaY"/>
    <property type="match status" value="1"/>
</dbReference>
<dbReference type="PANTHER" id="PTHR16821">
    <property type="entry name" value="FRATAXIN"/>
    <property type="match status" value="1"/>
</dbReference>
<dbReference type="PANTHER" id="PTHR16821:SF2">
    <property type="entry name" value="FRATAXIN, MITOCHONDRIAL"/>
    <property type="match status" value="1"/>
</dbReference>
<dbReference type="Pfam" id="PF01491">
    <property type="entry name" value="Frataxin_Cyay"/>
    <property type="match status" value="1"/>
</dbReference>
<dbReference type="SMART" id="SM01219">
    <property type="entry name" value="Frataxin_Cyay"/>
    <property type="match status" value="1"/>
</dbReference>
<dbReference type="SUPFAM" id="SSF55387">
    <property type="entry name" value="Frataxin/Nqo15-like"/>
    <property type="match status" value="1"/>
</dbReference>
<dbReference type="PROSITE" id="PS01344">
    <property type="entry name" value="FRATAXIN_1"/>
    <property type="match status" value="1"/>
</dbReference>
<dbReference type="PROSITE" id="PS50810">
    <property type="entry name" value="FRATAXIN_2"/>
    <property type="match status" value="1"/>
</dbReference>
<keyword id="KW-0408">Iron</keyword>
<keyword id="KW-0479">Metal-binding</keyword>
<keyword id="KW-1185">Reference proteome</keyword>
<accession>Q2L201</accession>
<name>CYAY_BORA1</name>
<feature type="chain" id="PRO_1000010911" description="Iron-sulfur cluster assembly protein CyaY">
    <location>
        <begin position="1"/>
        <end position="109"/>
    </location>
</feature>
<sequence>MTETEFLALVEQVLDSVERMADDWAAEQDLDIEANRSGNVLTLVFEDGTHVVINSQAAMQELWLASRSGGFHYRFDGQRWNDTRGGPGFVDALSQVCSAAAGVPLTVRL</sequence>
<reference key="1">
    <citation type="journal article" date="2006" name="J. Bacteriol.">
        <title>Comparison of the genome sequence of the poultry pathogen Bordetella avium with those of B. bronchiseptica, B. pertussis, and B. parapertussis reveals extensive diversity in surface structures associated with host interaction.</title>
        <authorList>
            <person name="Sebaihia M."/>
            <person name="Preston A."/>
            <person name="Maskell D.J."/>
            <person name="Kuzmiak H."/>
            <person name="Connell T.D."/>
            <person name="King N.D."/>
            <person name="Orndorff P.E."/>
            <person name="Miyamoto D.M."/>
            <person name="Thomson N.R."/>
            <person name="Harris D."/>
            <person name="Goble A."/>
            <person name="Lord A."/>
            <person name="Murphy L."/>
            <person name="Quail M.A."/>
            <person name="Rutter S."/>
            <person name="Squares R."/>
            <person name="Squares S."/>
            <person name="Woodward J."/>
            <person name="Parkhill J."/>
            <person name="Temple L.M."/>
        </authorList>
    </citation>
    <scope>NUCLEOTIDE SEQUENCE [LARGE SCALE GENOMIC DNA]</scope>
    <source>
        <strain>197N</strain>
    </source>
</reference>
<gene>
    <name evidence="1" type="primary">cyaY</name>
    <name type="ordered locus">BAV0071</name>
</gene>
<proteinExistence type="inferred from homology"/>
<protein>
    <recommendedName>
        <fullName evidence="1">Iron-sulfur cluster assembly protein CyaY</fullName>
    </recommendedName>
</protein>
<comment type="function">
    <text evidence="1">Involved in iron-sulfur (Fe-S) cluster assembly. May act as a regulator of Fe-S biogenesis.</text>
</comment>
<comment type="similarity">
    <text evidence="1">Belongs to the frataxin family.</text>
</comment>
<evidence type="ECO:0000255" key="1">
    <source>
        <dbReference type="HAMAP-Rule" id="MF_00142"/>
    </source>
</evidence>